<reference key="1">
    <citation type="journal article" date="1999" name="Nature">
        <title>Evidence for lateral gene transfer between Archaea and Bacteria from genome sequence of Thermotoga maritima.</title>
        <authorList>
            <person name="Nelson K.E."/>
            <person name="Clayton R.A."/>
            <person name="Gill S.R."/>
            <person name="Gwinn M.L."/>
            <person name="Dodson R.J."/>
            <person name="Haft D.H."/>
            <person name="Hickey E.K."/>
            <person name="Peterson J.D."/>
            <person name="Nelson W.C."/>
            <person name="Ketchum K.A."/>
            <person name="McDonald L.A."/>
            <person name="Utterback T.R."/>
            <person name="Malek J.A."/>
            <person name="Linher K.D."/>
            <person name="Garrett M.M."/>
            <person name="Stewart A.M."/>
            <person name="Cotton M.D."/>
            <person name="Pratt M.S."/>
            <person name="Phillips C.A."/>
            <person name="Richardson D.L."/>
            <person name="Heidelberg J.F."/>
            <person name="Sutton G.G."/>
            <person name="Fleischmann R.D."/>
            <person name="Eisen J.A."/>
            <person name="White O."/>
            <person name="Salzberg S.L."/>
            <person name="Smith H.O."/>
            <person name="Venter J.C."/>
            <person name="Fraser C.M."/>
        </authorList>
    </citation>
    <scope>NUCLEOTIDE SEQUENCE [LARGE SCALE GENOMIC DNA]</scope>
    <source>
        <strain>ATCC 43589 / DSM 3109 / JCM 10099 / NBRC 100826 / MSB8</strain>
    </source>
</reference>
<keyword id="KW-0963">Cytoplasm</keyword>
<keyword id="KW-0378">Hydrolase</keyword>
<keyword id="KW-0645">Protease</keyword>
<keyword id="KW-1185">Reference proteome</keyword>
<keyword id="KW-0720">Serine protease</keyword>
<evidence type="ECO:0000255" key="1">
    <source>
        <dbReference type="HAMAP-Rule" id="MF_00444"/>
    </source>
</evidence>
<comment type="function">
    <text evidence="1">Cleaves peptides in various proteins in a process that requires ATP hydrolysis. Has a chymotrypsin-like activity. Plays a major role in the degradation of misfolded proteins.</text>
</comment>
<comment type="catalytic activity">
    <reaction evidence="1">
        <text>Hydrolysis of proteins to small peptides in the presence of ATP and magnesium. alpha-casein is the usual test substrate. In the absence of ATP, only oligopeptides shorter than five residues are hydrolyzed (such as succinyl-Leu-Tyr-|-NHMec, and Leu-Tyr-Leu-|-Tyr-Trp, in which cleavage of the -Tyr-|-Leu- and -Tyr-|-Trp bonds also occurs).</text>
        <dbReference type="EC" id="3.4.21.92"/>
    </reaction>
</comment>
<comment type="subunit">
    <text evidence="1">Fourteen ClpP subunits assemble into 2 heptameric rings which stack back to back to give a disk-like structure with a central cavity, resembling the structure of eukaryotic proteasomes.</text>
</comment>
<comment type="subcellular location">
    <subcellularLocation>
        <location evidence="1">Cytoplasm</location>
    </subcellularLocation>
</comment>
<comment type="similarity">
    <text evidence="1">Belongs to the peptidase S14 family.</text>
</comment>
<dbReference type="EC" id="3.4.21.92" evidence="1"/>
<dbReference type="EMBL" id="AE000512">
    <property type="protein sequence ID" value="AAD35777.1"/>
    <property type="molecule type" value="Genomic_DNA"/>
</dbReference>
<dbReference type="PIR" id="E72345">
    <property type="entry name" value="E72345"/>
</dbReference>
<dbReference type="RefSeq" id="NP_228504.1">
    <property type="nucleotide sequence ID" value="NC_000853.1"/>
</dbReference>
<dbReference type="RefSeq" id="WP_004081059.1">
    <property type="nucleotide sequence ID" value="NZ_CP011107.1"/>
</dbReference>
<dbReference type="SMR" id="Q9WZF9"/>
<dbReference type="FunCoup" id="Q9WZF9">
    <property type="interactions" value="337"/>
</dbReference>
<dbReference type="STRING" id="243274.TM_0695"/>
<dbReference type="MEROPS" id="S14.001"/>
<dbReference type="PaxDb" id="243274-THEMA_01190"/>
<dbReference type="EnsemblBacteria" id="AAD35777">
    <property type="protein sequence ID" value="AAD35777"/>
    <property type="gene ID" value="TM_0695"/>
</dbReference>
<dbReference type="KEGG" id="tma:TM0695"/>
<dbReference type="KEGG" id="tmi:THEMA_01190"/>
<dbReference type="KEGG" id="tmm:Tmari_0695"/>
<dbReference type="KEGG" id="tmw:THMA_0710"/>
<dbReference type="eggNOG" id="COG0740">
    <property type="taxonomic scope" value="Bacteria"/>
</dbReference>
<dbReference type="InParanoid" id="Q9WZF9"/>
<dbReference type="OrthoDB" id="9802800at2"/>
<dbReference type="Proteomes" id="UP000008183">
    <property type="component" value="Chromosome"/>
</dbReference>
<dbReference type="GO" id="GO:0005737">
    <property type="term" value="C:cytoplasm"/>
    <property type="evidence" value="ECO:0007669"/>
    <property type="project" value="UniProtKB-SubCell"/>
</dbReference>
<dbReference type="GO" id="GO:0009368">
    <property type="term" value="C:endopeptidase Clp complex"/>
    <property type="evidence" value="ECO:0000318"/>
    <property type="project" value="GO_Central"/>
</dbReference>
<dbReference type="GO" id="GO:0004176">
    <property type="term" value="F:ATP-dependent peptidase activity"/>
    <property type="evidence" value="ECO:0000318"/>
    <property type="project" value="GO_Central"/>
</dbReference>
<dbReference type="GO" id="GO:0051117">
    <property type="term" value="F:ATPase binding"/>
    <property type="evidence" value="ECO:0000318"/>
    <property type="project" value="GO_Central"/>
</dbReference>
<dbReference type="GO" id="GO:0004252">
    <property type="term" value="F:serine-type endopeptidase activity"/>
    <property type="evidence" value="ECO:0000318"/>
    <property type="project" value="GO_Central"/>
</dbReference>
<dbReference type="GO" id="GO:0006515">
    <property type="term" value="P:protein quality control for misfolded or incompletely synthesized proteins"/>
    <property type="evidence" value="ECO:0000318"/>
    <property type="project" value="GO_Central"/>
</dbReference>
<dbReference type="CDD" id="cd07017">
    <property type="entry name" value="S14_ClpP_2"/>
    <property type="match status" value="1"/>
</dbReference>
<dbReference type="FunFam" id="3.90.226.10:FF:000001">
    <property type="entry name" value="ATP-dependent Clp protease proteolytic subunit"/>
    <property type="match status" value="1"/>
</dbReference>
<dbReference type="Gene3D" id="3.90.226.10">
    <property type="entry name" value="2-enoyl-CoA Hydratase, Chain A, domain 1"/>
    <property type="match status" value="1"/>
</dbReference>
<dbReference type="HAMAP" id="MF_00444">
    <property type="entry name" value="ClpP"/>
    <property type="match status" value="1"/>
</dbReference>
<dbReference type="InterPro" id="IPR001907">
    <property type="entry name" value="ClpP"/>
</dbReference>
<dbReference type="InterPro" id="IPR029045">
    <property type="entry name" value="ClpP/crotonase-like_dom_sf"/>
</dbReference>
<dbReference type="InterPro" id="IPR023562">
    <property type="entry name" value="ClpP/TepA"/>
</dbReference>
<dbReference type="InterPro" id="IPR033135">
    <property type="entry name" value="ClpP_His_AS"/>
</dbReference>
<dbReference type="InterPro" id="IPR018215">
    <property type="entry name" value="ClpP_Ser_AS"/>
</dbReference>
<dbReference type="NCBIfam" id="TIGR00493">
    <property type="entry name" value="clpP"/>
    <property type="match status" value="1"/>
</dbReference>
<dbReference type="NCBIfam" id="NF001368">
    <property type="entry name" value="PRK00277.1"/>
    <property type="match status" value="1"/>
</dbReference>
<dbReference type="NCBIfam" id="NF009205">
    <property type="entry name" value="PRK12553.1"/>
    <property type="match status" value="1"/>
</dbReference>
<dbReference type="PANTHER" id="PTHR10381">
    <property type="entry name" value="ATP-DEPENDENT CLP PROTEASE PROTEOLYTIC SUBUNIT"/>
    <property type="match status" value="1"/>
</dbReference>
<dbReference type="PANTHER" id="PTHR10381:SF70">
    <property type="entry name" value="ATP-DEPENDENT CLP PROTEASE PROTEOLYTIC SUBUNIT"/>
    <property type="match status" value="1"/>
</dbReference>
<dbReference type="Pfam" id="PF00574">
    <property type="entry name" value="CLP_protease"/>
    <property type="match status" value="1"/>
</dbReference>
<dbReference type="PRINTS" id="PR00127">
    <property type="entry name" value="CLPPROTEASEP"/>
</dbReference>
<dbReference type="SUPFAM" id="SSF52096">
    <property type="entry name" value="ClpP/crotonase"/>
    <property type="match status" value="1"/>
</dbReference>
<dbReference type="PROSITE" id="PS00382">
    <property type="entry name" value="CLP_PROTEASE_HIS"/>
    <property type="match status" value="1"/>
</dbReference>
<dbReference type="PROSITE" id="PS00381">
    <property type="entry name" value="CLP_PROTEASE_SER"/>
    <property type="match status" value="1"/>
</dbReference>
<proteinExistence type="inferred from homology"/>
<accession>Q9WZF9</accession>
<organism>
    <name type="scientific">Thermotoga maritima (strain ATCC 43589 / DSM 3109 / JCM 10099 / NBRC 100826 / MSB8)</name>
    <dbReference type="NCBI Taxonomy" id="243274"/>
    <lineage>
        <taxon>Bacteria</taxon>
        <taxon>Thermotogati</taxon>
        <taxon>Thermotogota</taxon>
        <taxon>Thermotogae</taxon>
        <taxon>Thermotogales</taxon>
        <taxon>Thermotogaceae</taxon>
        <taxon>Thermotoga</taxon>
    </lineage>
</organism>
<protein>
    <recommendedName>
        <fullName evidence="1">ATP-dependent Clp protease proteolytic subunit</fullName>
        <ecNumber evidence="1">3.4.21.92</ecNumber>
    </recommendedName>
    <alternativeName>
        <fullName evidence="1">Endopeptidase Clp</fullName>
    </alternativeName>
</protein>
<name>CLPP_THEMA</name>
<gene>
    <name evidence="1" type="primary">clpP</name>
    <name type="ordered locus">TM_0695</name>
</gene>
<feature type="chain" id="PRO_0000179698" description="ATP-dependent Clp protease proteolytic subunit">
    <location>
        <begin position="1"/>
        <end position="203"/>
    </location>
</feature>
<feature type="active site" description="Nucleophile" evidence="1">
    <location>
        <position position="107"/>
    </location>
</feature>
<feature type="active site" evidence="1">
    <location>
        <position position="132"/>
    </location>
</feature>
<sequence length="203" mass="22573">MTVKEKKIIDQYVPIVVESTGRYERAYDIFSRLLKDRIVFLGSPIDDYVANLVIAQLLFLEAEDPDKDVYLYINSPGGSVTAGLAIYDTMQYIKCDVSTICVGQAASMAAVLLAAGAKGKRYALPNARIMIHQPLGGAEGPAKDVEIITRELLRIKDLLNRILSKHTGQPIEKIEKDTDRDFFMSAEEAKEYGIVDKVVSTRE</sequence>